<accession>A7INN4</accession>
<evidence type="ECO:0000255" key="1">
    <source>
        <dbReference type="HAMAP-Rule" id="MF_00236"/>
    </source>
</evidence>
<evidence type="ECO:0000256" key="2">
    <source>
        <dbReference type="SAM" id="MobiDB-lite"/>
    </source>
</evidence>
<name>TATA_XANP2</name>
<comment type="function">
    <text evidence="1">Part of the twin-arginine translocation (Tat) system that transports large folded proteins containing a characteristic twin-arginine motif in their signal peptide across membranes. TatA could form the protein-conducting channel of the Tat system.</text>
</comment>
<comment type="subunit">
    <text evidence="1">The Tat system comprises two distinct complexes: a TatABC complex, containing multiple copies of TatA, TatB and TatC subunits, and a separate TatA complex, containing only TatA subunits. Substrates initially bind to the TatABC complex, which probably triggers association of the separate TatA complex to form the active translocon.</text>
</comment>
<comment type="subcellular location">
    <subcellularLocation>
        <location evidence="1">Cell inner membrane</location>
        <topology evidence="1">Single-pass membrane protein</topology>
    </subcellularLocation>
</comment>
<comment type="similarity">
    <text evidence="1">Belongs to the TatA/E family.</text>
</comment>
<dbReference type="EMBL" id="CP000781">
    <property type="protein sequence ID" value="ABS69628.1"/>
    <property type="molecule type" value="Genomic_DNA"/>
</dbReference>
<dbReference type="SMR" id="A7INN4"/>
<dbReference type="STRING" id="78245.Xaut_4407"/>
<dbReference type="KEGG" id="xau:Xaut_4407"/>
<dbReference type="eggNOG" id="COG1826">
    <property type="taxonomic scope" value="Bacteria"/>
</dbReference>
<dbReference type="HOGENOM" id="CLU_086034_5_0_5"/>
<dbReference type="OrthoDB" id="7161179at2"/>
<dbReference type="PhylomeDB" id="A7INN4"/>
<dbReference type="Proteomes" id="UP000002417">
    <property type="component" value="Chromosome"/>
</dbReference>
<dbReference type="GO" id="GO:0033281">
    <property type="term" value="C:TAT protein transport complex"/>
    <property type="evidence" value="ECO:0007669"/>
    <property type="project" value="UniProtKB-UniRule"/>
</dbReference>
<dbReference type="GO" id="GO:0008320">
    <property type="term" value="F:protein transmembrane transporter activity"/>
    <property type="evidence" value="ECO:0007669"/>
    <property type="project" value="UniProtKB-UniRule"/>
</dbReference>
<dbReference type="GO" id="GO:0043953">
    <property type="term" value="P:protein transport by the Tat complex"/>
    <property type="evidence" value="ECO:0007669"/>
    <property type="project" value="UniProtKB-UniRule"/>
</dbReference>
<dbReference type="Gene3D" id="1.20.5.3310">
    <property type="match status" value="1"/>
</dbReference>
<dbReference type="HAMAP" id="MF_00236">
    <property type="entry name" value="TatA_E"/>
    <property type="match status" value="1"/>
</dbReference>
<dbReference type="InterPro" id="IPR003369">
    <property type="entry name" value="TatA/B/E"/>
</dbReference>
<dbReference type="InterPro" id="IPR006312">
    <property type="entry name" value="TatA/E"/>
</dbReference>
<dbReference type="NCBIfam" id="NF001940">
    <property type="entry name" value="PRK00720.1"/>
    <property type="match status" value="1"/>
</dbReference>
<dbReference type="NCBIfam" id="TIGR01411">
    <property type="entry name" value="tatAE"/>
    <property type="match status" value="1"/>
</dbReference>
<dbReference type="PANTHER" id="PTHR42982">
    <property type="entry name" value="SEC-INDEPENDENT PROTEIN TRANSLOCASE PROTEIN TATA"/>
    <property type="match status" value="1"/>
</dbReference>
<dbReference type="PANTHER" id="PTHR42982:SF1">
    <property type="entry name" value="SEC-INDEPENDENT PROTEIN TRANSLOCASE PROTEIN TATA"/>
    <property type="match status" value="1"/>
</dbReference>
<dbReference type="Pfam" id="PF02416">
    <property type="entry name" value="TatA_B_E"/>
    <property type="match status" value="1"/>
</dbReference>
<organism>
    <name type="scientific">Xanthobacter autotrophicus (strain ATCC BAA-1158 / Py2)</name>
    <dbReference type="NCBI Taxonomy" id="78245"/>
    <lineage>
        <taxon>Bacteria</taxon>
        <taxon>Pseudomonadati</taxon>
        <taxon>Pseudomonadota</taxon>
        <taxon>Alphaproteobacteria</taxon>
        <taxon>Hyphomicrobiales</taxon>
        <taxon>Xanthobacteraceae</taxon>
        <taxon>Xanthobacter</taxon>
    </lineage>
</organism>
<keyword id="KW-0997">Cell inner membrane</keyword>
<keyword id="KW-1003">Cell membrane</keyword>
<keyword id="KW-0472">Membrane</keyword>
<keyword id="KW-0653">Protein transport</keyword>
<keyword id="KW-1185">Reference proteome</keyword>
<keyword id="KW-0811">Translocation</keyword>
<keyword id="KW-0812">Transmembrane</keyword>
<keyword id="KW-1133">Transmembrane helix</keyword>
<keyword id="KW-0813">Transport</keyword>
<gene>
    <name evidence="1" type="primary">tatA</name>
    <name type="ordered locus">Xaut_4407</name>
</gene>
<reference key="1">
    <citation type="submission" date="2007-07" db="EMBL/GenBank/DDBJ databases">
        <title>Complete sequence of chromosome of Xanthobacter autotrophicus Py2.</title>
        <authorList>
            <consortium name="US DOE Joint Genome Institute"/>
            <person name="Copeland A."/>
            <person name="Lucas S."/>
            <person name="Lapidus A."/>
            <person name="Barry K."/>
            <person name="Glavina del Rio T."/>
            <person name="Hammon N."/>
            <person name="Israni S."/>
            <person name="Dalin E."/>
            <person name="Tice H."/>
            <person name="Pitluck S."/>
            <person name="Sims D."/>
            <person name="Brettin T."/>
            <person name="Bruce D."/>
            <person name="Detter J.C."/>
            <person name="Han C."/>
            <person name="Tapia R."/>
            <person name="Brainard J."/>
            <person name="Schmutz J."/>
            <person name="Larimer F."/>
            <person name="Land M."/>
            <person name="Hauser L."/>
            <person name="Kyrpides N."/>
            <person name="Kim E."/>
            <person name="Ensigns S.A."/>
            <person name="Richardson P."/>
        </authorList>
    </citation>
    <scope>NUCLEOTIDE SEQUENCE [LARGE SCALE GENOMIC DNA]</scope>
    <source>
        <strain>ATCC BAA-1158 / Py2</strain>
    </source>
</reference>
<protein>
    <recommendedName>
        <fullName evidence="1">Sec-independent protein translocase protein TatA</fullName>
    </recommendedName>
</protein>
<sequence length="78" mass="8301">MGSLSIWHWIVVLAVVLLLFGRGKISDLMGDVAKGIKSFKKGLAEDDEPAKTPAAPPEAPRPLPHQTSSAAEAEKKPV</sequence>
<feature type="chain" id="PRO_1000197917" description="Sec-independent protein translocase protein TatA">
    <location>
        <begin position="1"/>
        <end position="78"/>
    </location>
</feature>
<feature type="transmembrane region" description="Helical" evidence="1">
    <location>
        <begin position="1"/>
        <end position="21"/>
    </location>
</feature>
<feature type="region of interest" description="Disordered" evidence="2">
    <location>
        <begin position="43"/>
        <end position="78"/>
    </location>
</feature>
<feature type="compositionally biased region" description="Pro residues" evidence="2">
    <location>
        <begin position="54"/>
        <end position="63"/>
    </location>
</feature>
<proteinExistence type="inferred from homology"/>